<protein>
    <recommendedName>
        <fullName evidence="3">Small ribosomal subunit protein bS21</fullName>
    </recommendedName>
    <alternativeName>
        <fullName>30S ribosomal protein S21</fullName>
    </alternativeName>
</protein>
<accession>P68684</accession>
<accession>P02379</accession>
<accession>Q8ZI69</accession>
<feature type="initiator methionine" description="Removed" evidence="1">
    <location>
        <position position="1"/>
    </location>
</feature>
<feature type="chain" id="PRO_0000178371" description="Small ribosomal subunit protein bS21">
    <location>
        <begin position="2"/>
        <end position="71"/>
    </location>
</feature>
<feature type="region of interest" description="Disordered" evidence="2">
    <location>
        <begin position="43"/>
        <end position="71"/>
    </location>
</feature>
<feature type="compositionally biased region" description="Basic residues" evidence="2">
    <location>
        <begin position="46"/>
        <end position="59"/>
    </location>
</feature>
<feature type="compositionally biased region" description="Basic and acidic residues" evidence="2">
    <location>
        <begin position="60"/>
        <end position="71"/>
    </location>
</feature>
<keyword id="KW-1185">Reference proteome</keyword>
<keyword id="KW-0687">Ribonucleoprotein</keyword>
<keyword id="KW-0689">Ribosomal protein</keyword>
<comment type="similarity">
    <text evidence="3">Belongs to the bacterial ribosomal protein bS21 family.</text>
</comment>
<organism>
    <name type="scientific">Salmonella typhimurium (strain LT2 / SGSC1412 / ATCC 700720)</name>
    <dbReference type="NCBI Taxonomy" id="99287"/>
    <lineage>
        <taxon>Bacteria</taxon>
        <taxon>Pseudomonadati</taxon>
        <taxon>Pseudomonadota</taxon>
        <taxon>Gammaproteobacteria</taxon>
        <taxon>Enterobacterales</taxon>
        <taxon>Enterobacteriaceae</taxon>
        <taxon>Salmonella</taxon>
    </lineage>
</organism>
<evidence type="ECO:0000250" key="1"/>
<evidence type="ECO:0000256" key="2">
    <source>
        <dbReference type="SAM" id="MobiDB-lite"/>
    </source>
</evidence>
<evidence type="ECO:0000305" key="3"/>
<proteinExistence type="inferred from homology"/>
<gene>
    <name type="primary">rpsU</name>
    <name type="ordered locus">STM3209</name>
</gene>
<sequence length="71" mass="8500">MPVIKVRENEPFDVALRRFKRSCEKAGVLAEVRRREFYEKPTTERKRAKASAVKRHAKKLARENARRTRLY</sequence>
<dbReference type="EMBL" id="M14427">
    <property type="protein sequence ID" value="AAA27240.1"/>
    <property type="molecule type" value="Genomic_DNA"/>
</dbReference>
<dbReference type="EMBL" id="AE006468">
    <property type="protein sequence ID" value="AAL22083.1"/>
    <property type="molecule type" value="Genomic_DNA"/>
</dbReference>
<dbReference type="PIR" id="A23985">
    <property type="entry name" value="R3EB21"/>
</dbReference>
<dbReference type="RefSeq" id="NP_462124.1">
    <property type="nucleotide sequence ID" value="NC_003197.2"/>
</dbReference>
<dbReference type="RefSeq" id="WP_001144069.1">
    <property type="nucleotide sequence ID" value="NC_003197.2"/>
</dbReference>
<dbReference type="SMR" id="P68684"/>
<dbReference type="STRING" id="99287.STM3209"/>
<dbReference type="PaxDb" id="99287-STM3209"/>
<dbReference type="GeneID" id="1254732"/>
<dbReference type="GeneID" id="98390195"/>
<dbReference type="KEGG" id="stm:STM3209"/>
<dbReference type="PATRIC" id="fig|99287.12.peg.3405"/>
<dbReference type="HOGENOM" id="CLU_159258_1_0_6"/>
<dbReference type="OMA" id="HQHFEKP"/>
<dbReference type="PhylomeDB" id="P68684"/>
<dbReference type="BioCyc" id="SENT99287:STM3209-MONOMER"/>
<dbReference type="PRO" id="PR:P68684"/>
<dbReference type="Proteomes" id="UP000001014">
    <property type="component" value="Chromosome"/>
</dbReference>
<dbReference type="GO" id="GO:1990904">
    <property type="term" value="C:ribonucleoprotein complex"/>
    <property type="evidence" value="ECO:0007669"/>
    <property type="project" value="UniProtKB-KW"/>
</dbReference>
<dbReference type="GO" id="GO:0005840">
    <property type="term" value="C:ribosome"/>
    <property type="evidence" value="ECO:0007669"/>
    <property type="project" value="UniProtKB-KW"/>
</dbReference>
<dbReference type="GO" id="GO:0003735">
    <property type="term" value="F:structural constituent of ribosome"/>
    <property type="evidence" value="ECO:0007669"/>
    <property type="project" value="InterPro"/>
</dbReference>
<dbReference type="GO" id="GO:0006412">
    <property type="term" value="P:translation"/>
    <property type="evidence" value="ECO:0007669"/>
    <property type="project" value="UniProtKB-UniRule"/>
</dbReference>
<dbReference type="FunFam" id="1.20.5.1150:FF:000001">
    <property type="entry name" value="30S ribosomal protein S21"/>
    <property type="match status" value="1"/>
</dbReference>
<dbReference type="Gene3D" id="1.20.5.1150">
    <property type="entry name" value="Ribosomal protein S8"/>
    <property type="match status" value="1"/>
</dbReference>
<dbReference type="HAMAP" id="MF_00358">
    <property type="entry name" value="Ribosomal_bS21"/>
    <property type="match status" value="1"/>
</dbReference>
<dbReference type="InterPro" id="IPR001911">
    <property type="entry name" value="Ribosomal_bS21"/>
</dbReference>
<dbReference type="InterPro" id="IPR018278">
    <property type="entry name" value="Ribosomal_bS21_CS"/>
</dbReference>
<dbReference type="InterPro" id="IPR038380">
    <property type="entry name" value="Ribosomal_bS21_sf"/>
</dbReference>
<dbReference type="NCBIfam" id="TIGR00030">
    <property type="entry name" value="S21p"/>
    <property type="match status" value="1"/>
</dbReference>
<dbReference type="PANTHER" id="PTHR21109">
    <property type="entry name" value="MITOCHONDRIAL 28S RIBOSOMAL PROTEIN S21"/>
    <property type="match status" value="1"/>
</dbReference>
<dbReference type="PANTHER" id="PTHR21109:SF22">
    <property type="entry name" value="SMALL RIBOSOMAL SUBUNIT PROTEIN BS21"/>
    <property type="match status" value="1"/>
</dbReference>
<dbReference type="Pfam" id="PF01165">
    <property type="entry name" value="Ribosomal_S21"/>
    <property type="match status" value="1"/>
</dbReference>
<dbReference type="PRINTS" id="PR00976">
    <property type="entry name" value="RIBOSOMALS21"/>
</dbReference>
<dbReference type="PROSITE" id="PS01181">
    <property type="entry name" value="RIBOSOMAL_S21"/>
    <property type="match status" value="1"/>
</dbReference>
<name>RS21_SALTY</name>
<reference key="1">
    <citation type="journal article" date="1985" name="Gene">
        <title>Nucleotide sequence of the rpsU-dnaG-rpoD operon from Salmonella typhimurium and a comparison of this sequence with the homologous operon of Escherichia coli.</title>
        <authorList>
            <person name="Erickson B.D."/>
            <person name="Burton Z.F."/>
            <person name="Watanabe K.K."/>
            <person name="Burgess R.R."/>
        </authorList>
    </citation>
    <scope>NUCLEOTIDE SEQUENCE [GENOMIC DNA]</scope>
</reference>
<reference key="2">
    <citation type="journal article" date="2001" name="Nature">
        <title>Complete genome sequence of Salmonella enterica serovar Typhimurium LT2.</title>
        <authorList>
            <person name="McClelland M."/>
            <person name="Sanderson K.E."/>
            <person name="Spieth J."/>
            <person name="Clifton S.W."/>
            <person name="Latreille P."/>
            <person name="Courtney L."/>
            <person name="Porwollik S."/>
            <person name="Ali J."/>
            <person name="Dante M."/>
            <person name="Du F."/>
            <person name="Hou S."/>
            <person name="Layman D."/>
            <person name="Leonard S."/>
            <person name="Nguyen C."/>
            <person name="Scott K."/>
            <person name="Holmes A."/>
            <person name="Grewal N."/>
            <person name="Mulvaney E."/>
            <person name="Ryan E."/>
            <person name="Sun H."/>
            <person name="Florea L."/>
            <person name="Miller W."/>
            <person name="Stoneking T."/>
            <person name="Nhan M."/>
            <person name="Waterston R."/>
            <person name="Wilson R.K."/>
        </authorList>
    </citation>
    <scope>NUCLEOTIDE SEQUENCE [LARGE SCALE GENOMIC DNA]</scope>
    <source>
        <strain>LT2 / SGSC1412 / ATCC 700720</strain>
    </source>
</reference>